<feature type="chain" id="PRO_0000132183" description="Small ribosomal subunit protein uS13">
    <location>
        <begin position="1"/>
        <end position="162"/>
    </location>
</feature>
<feature type="region of interest" description="Disordered" evidence="2">
    <location>
        <begin position="142"/>
        <end position="162"/>
    </location>
</feature>
<protein>
    <recommendedName>
        <fullName evidence="1">Small ribosomal subunit protein uS13</fullName>
    </recommendedName>
    <alternativeName>
        <fullName evidence="3">30S ribosomal protein S13</fullName>
    </alternativeName>
</protein>
<organism>
    <name type="scientific">Methanosarcina mazei (strain ATCC BAA-159 / DSM 3647 / Goe1 / Go1 / JCM 11833 / OCM 88)</name>
    <name type="common">Methanosarcina frisia</name>
    <dbReference type="NCBI Taxonomy" id="192952"/>
    <lineage>
        <taxon>Archaea</taxon>
        <taxon>Methanobacteriati</taxon>
        <taxon>Methanobacteriota</taxon>
        <taxon>Stenosarchaea group</taxon>
        <taxon>Methanomicrobia</taxon>
        <taxon>Methanosarcinales</taxon>
        <taxon>Methanosarcinaceae</taxon>
        <taxon>Methanosarcina</taxon>
    </lineage>
</organism>
<gene>
    <name evidence="1" type="primary">rps13</name>
    <name type="ordered locus">MM_2155</name>
</gene>
<keyword id="KW-0687">Ribonucleoprotein</keyword>
<keyword id="KW-0689">Ribosomal protein</keyword>
<keyword id="KW-0694">RNA-binding</keyword>
<keyword id="KW-0699">rRNA-binding</keyword>
<proteinExistence type="inferred from homology"/>
<dbReference type="EMBL" id="AE008384">
    <property type="protein sequence ID" value="AAM31851.1"/>
    <property type="molecule type" value="Genomic_DNA"/>
</dbReference>
<dbReference type="RefSeq" id="WP_011034086.1">
    <property type="nucleotide sequence ID" value="NC_003901.1"/>
</dbReference>
<dbReference type="SMR" id="Q8PV19"/>
<dbReference type="KEGG" id="mma:MM_2155"/>
<dbReference type="PATRIC" id="fig|192952.21.peg.2471"/>
<dbReference type="eggNOG" id="arCOG01722">
    <property type="taxonomic scope" value="Archaea"/>
</dbReference>
<dbReference type="HOGENOM" id="CLU_103849_0_1_2"/>
<dbReference type="Proteomes" id="UP000000595">
    <property type="component" value="Chromosome"/>
</dbReference>
<dbReference type="GO" id="GO:0005829">
    <property type="term" value="C:cytosol"/>
    <property type="evidence" value="ECO:0007669"/>
    <property type="project" value="TreeGrafter"/>
</dbReference>
<dbReference type="GO" id="GO:0015935">
    <property type="term" value="C:small ribosomal subunit"/>
    <property type="evidence" value="ECO:0007669"/>
    <property type="project" value="TreeGrafter"/>
</dbReference>
<dbReference type="GO" id="GO:0019843">
    <property type="term" value="F:rRNA binding"/>
    <property type="evidence" value="ECO:0007669"/>
    <property type="project" value="UniProtKB-UniRule"/>
</dbReference>
<dbReference type="GO" id="GO:0003735">
    <property type="term" value="F:structural constituent of ribosome"/>
    <property type="evidence" value="ECO:0007669"/>
    <property type="project" value="InterPro"/>
</dbReference>
<dbReference type="GO" id="GO:0006412">
    <property type="term" value="P:translation"/>
    <property type="evidence" value="ECO:0007669"/>
    <property type="project" value="UniProtKB-UniRule"/>
</dbReference>
<dbReference type="FunFam" id="1.10.8.50:FF:000001">
    <property type="entry name" value="30S ribosomal protein S13"/>
    <property type="match status" value="1"/>
</dbReference>
<dbReference type="FunFam" id="4.10.910.10:FF:000002">
    <property type="entry name" value="40S ribosomal protein S18"/>
    <property type="match status" value="1"/>
</dbReference>
<dbReference type="Gene3D" id="1.10.8.50">
    <property type="match status" value="1"/>
</dbReference>
<dbReference type="Gene3D" id="4.10.910.10">
    <property type="entry name" value="30s ribosomal protein s13, domain 2"/>
    <property type="match status" value="1"/>
</dbReference>
<dbReference type="HAMAP" id="MF_01315">
    <property type="entry name" value="Ribosomal_uS13"/>
    <property type="match status" value="1"/>
</dbReference>
<dbReference type="InterPro" id="IPR027437">
    <property type="entry name" value="Rbsml_uS13_C"/>
</dbReference>
<dbReference type="InterPro" id="IPR001892">
    <property type="entry name" value="Ribosomal_uS13"/>
</dbReference>
<dbReference type="InterPro" id="IPR010979">
    <property type="entry name" value="Ribosomal_uS13-like_H2TH"/>
</dbReference>
<dbReference type="InterPro" id="IPR019977">
    <property type="entry name" value="Ribosomal_uS13_archaeal"/>
</dbReference>
<dbReference type="InterPro" id="IPR018269">
    <property type="entry name" value="Ribosomal_uS13_CS"/>
</dbReference>
<dbReference type="NCBIfam" id="NF003140">
    <property type="entry name" value="PRK04053.1"/>
    <property type="match status" value="1"/>
</dbReference>
<dbReference type="NCBIfam" id="TIGR03629">
    <property type="entry name" value="uS13_arch"/>
    <property type="match status" value="1"/>
</dbReference>
<dbReference type="PANTHER" id="PTHR10871">
    <property type="entry name" value="30S RIBOSOMAL PROTEIN S13/40S RIBOSOMAL PROTEIN S18"/>
    <property type="match status" value="1"/>
</dbReference>
<dbReference type="PANTHER" id="PTHR10871:SF3">
    <property type="entry name" value="SMALL RIBOSOMAL SUBUNIT PROTEIN US13"/>
    <property type="match status" value="1"/>
</dbReference>
<dbReference type="Pfam" id="PF00416">
    <property type="entry name" value="Ribosomal_S13"/>
    <property type="match status" value="1"/>
</dbReference>
<dbReference type="PIRSF" id="PIRSF002134">
    <property type="entry name" value="Ribosomal_S13"/>
    <property type="match status" value="1"/>
</dbReference>
<dbReference type="SUPFAM" id="SSF46946">
    <property type="entry name" value="S13-like H2TH domain"/>
    <property type="match status" value="1"/>
</dbReference>
<dbReference type="PROSITE" id="PS00646">
    <property type="entry name" value="RIBOSOMAL_S13_1"/>
    <property type="match status" value="1"/>
</dbReference>
<dbReference type="PROSITE" id="PS50159">
    <property type="entry name" value="RIBOSOMAL_S13_2"/>
    <property type="match status" value="1"/>
</dbReference>
<comment type="function">
    <text evidence="1">Located at the top of the head of the 30S subunit, it contacts several helices of the 16S rRNA. In the 70S ribosome it contacts the 23S rRNA (bridge B1a) and protein L5 of the 50S subunit (bridge B1b), connecting the 2 subunits; these bridges are implicated in subunit movement.</text>
</comment>
<comment type="subunit">
    <text evidence="1">Part of the 30S ribosomal subunit. Forms a loose heterodimer with protein S19. Forms two bridges to the 50S subunit in the 70S ribosome.</text>
</comment>
<comment type="similarity">
    <text evidence="1">Belongs to the universal ribosomal protein uS13 family.</text>
</comment>
<evidence type="ECO:0000255" key="1">
    <source>
        <dbReference type="HAMAP-Rule" id="MF_01315"/>
    </source>
</evidence>
<evidence type="ECO:0000256" key="2">
    <source>
        <dbReference type="SAM" id="MobiDB-lite"/>
    </source>
</evidence>
<evidence type="ECO:0000305" key="3"/>
<sequence>MLHALQWRKYMAEENNNEELRHLVRIMNTDLKGAKPVEYALTGLPGIGRRTAILIAKGAGVDPTATLGYLPDEEVAKLDAAIGKFEEIVPSWMLNRQKDLTTGQDKHLLGTDILLTFREDINNLKKVRAYRGLRHERGLKVRGQRTKSTGRRGSTVGVSRKK</sequence>
<reference key="1">
    <citation type="journal article" date="2002" name="J. Mol. Microbiol. Biotechnol.">
        <title>The genome of Methanosarcina mazei: evidence for lateral gene transfer between Bacteria and Archaea.</title>
        <authorList>
            <person name="Deppenmeier U."/>
            <person name="Johann A."/>
            <person name="Hartsch T."/>
            <person name="Merkl R."/>
            <person name="Schmitz R.A."/>
            <person name="Martinez-Arias R."/>
            <person name="Henne A."/>
            <person name="Wiezer A."/>
            <person name="Baeumer S."/>
            <person name="Jacobi C."/>
            <person name="Brueggemann H."/>
            <person name="Lienard T."/>
            <person name="Christmann A."/>
            <person name="Boemecke M."/>
            <person name="Steckel S."/>
            <person name="Bhattacharyya A."/>
            <person name="Lykidis A."/>
            <person name="Overbeek R."/>
            <person name="Klenk H.-P."/>
            <person name="Gunsalus R.P."/>
            <person name="Fritz H.-J."/>
            <person name="Gottschalk G."/>
        </authorList>
    </citation>
    <scope>NUCLEOTIDE SEQUENCE [LARGE SCALE GENOMIC DNA]</scope>
    <source>
        <strain>ATCC BAA-159 / DSM 3647 / Goe1 / Go1 / JCM 11833 / OCM 88</strain>
    </source>
</reference>
<accession>Q8PV19</accession>
<name>RS13_METMA</name>